<name>MURJ_HELPJ</name>
<gene>
    <name evidence="1" type="primary">murJ</name>
    <name type="synonym">mviN</name>
    <name type="ordered locus">jhp_0817</name>
</gene>
<reference key="1">
    <citation type="journal article" date="1999" name="Nature">
        <title>Genomic sequence comparison of two unrelated isolates of the human gastric pathogen Helicobacter pylori.</title>
        <authorList>
            <person name="Alm R.A."/>
            <person name="Ling L.-S.L."/>
            <person name="Moir D.T."/>
            <person name="King B.L."/>
            <person name="Brown E.D."/>
            <person name="Doig P.C."/>
            <person name="Smith D.R."/>
            <person name="Noonan B."/>
            <person name="Guild B.C."/>
            <person name="deJonge B.L."/>
            <person name="Carmel G."/>
            <person name="Tummino P.J."/>
            <person name="Caruso A."/>
            <person name="Uria-Nickelsen M."/>
            <person name="Mills D.M."/>
            <person name="Ives C."/>
            <person name="Gibson R."/>
            <person name="Merberg D."/>
            <person name="Mills S.D."/>
            <person name="Jiang Q."/>
            <person name="Taylor D.E."/>
            <person name="Vovis G.F."/>
            <person name="Trust T.J."/>
        </authorList>
    </citation>
    <scope>NUCLEOTIDE SEQUENCE [LARGE SCALE GENOMIC DNA]</scope>
    <source>
        <strain>J99 / ATCC 700824</strain>
    </source>
</reference>
<organism>
    <name type="scientific">Helicobacter pylori (strain J99 / ATCC 700824)</name>
    <name type="common">Campylobacter pylori J99</name>
    <dbReference type="NCBI Taxonomy" id="85963"/>
    <lineage>
        <taxon>Bacteria</taxon>
        <taxon>Pseudomonadati</taxon>
        <taxon>Campylobacterota</taxon>
        <taxon>Epsilonproteobacteria</taxon>
        <taxon>Campylobacterales</taxon>
        <taxon>Helicobacteraceae</taxon>
        <taxon>Helicobacter</taxon>
    </lineage>
</organism>
<sequence>MANILGAGVYSDIFFVAFKLPNLFRRIFAEGSFSQSFLPSFIRSSIKGGFASLVGLIFCGVLFMWCLLVALNPLWLTKLLAYGFDEETLKLCTPIVAINFWYLLLVFITTFLGALLQYKHSFFASAYSASLLNLCMILALLISKEKTHLEALYYLSYGVLLGGVAQILLHFYPLVKLGLWDLLFKGLLGFKTKNTNKKEYRLNRAKKDLKAFFKQFFPSVLGNSSAQIASFLDTTIASFLASGSVSYLYYANRVFQLPLALFAIAISTALFPSIAIALKNNQQDLILQRLQKAWFFLVGVLLLCSIGGIMLSKEITELLFERGQFSPKDTLITSQVFSLYLLGLLPFGLTKLFSLWLYAKLEQKKAAKISLISLFLGLAASLSLMPLLGVLGLALANSLSGLFLFVLTIKAFGFQSFLGIIKNLKSWLVILFLACVEILLLLAFKSWVTHLYLFYYFQGF</sequence>
<dbReference type="EMBL" id="AE001439">
    <property type="protein sequence ID" value="AAD06398.1"/>
    <property type="molecule type" value="Genomic_DNA"/>
</dbReference>
<dbReference type="PIR" id="C71884">
    <property type="entry name" value="C71884"/>
</dbReference>
<dbReference type="SMR" id="Q9ZKW7"/>
<dbReference type="KEGG" id="hpj:jhp_0817"/>
<dbReference type="eggNOG" id="COG0728">
    <property type="taxonomic scope" value="Bacteria"/>
</dbReference>
<dbReference type="UniPathway" id="UPA00219"/>
<dbReference type="Proteomes" id="UP000000804">
    <property type="component" value="Chromosome"/>
</dbReference>
<dbReference type="GO" id="GO:0005886">
    <property type="term" value="C:plasma membrane"/>
    <property type="evidence" value="ECO:0007669"/>
    <property type="project" value="UniProtKB-SubCell"/>
</dbReference>
<dbReference type="GO" id="GO:0015648">
    <property type="term" value="F:lipid-linked peptidoglycan transporter activity"/>
    <property type="evidence" value="ECO:0007669"/>
    <property type="project" value="UniProtKB-UniRule"/>
</dbReference>
<dbReference type="GO" id="GO:0071555">
    <property type="term" value="P:cell wall organization"/>
    <property type="evidence" value="ECO:0007669"/>
    <property type="project" value="UniProtKB-KW"/>
</dbReference>
<dbReference type="GO" id="GO:0009252">
    <property type="term" value="P:peptidoglycan biosynthetic process"/>
    <property type="evidence" value="ECO:0007669"/>
    <property type="project" value="UniProtKB-UniRule"/>
</dbReference>
<dbReference type="GO" id="GO:0008360">
    <property type="term" value="P:regulation of cell shape"/>
    <property type="evidence" value="ECO:0007669"/>
    <property type="project" value="UniProtKB-KW"/>
</dbReference>
<dbReference type="CDD" id="cd13123">
    <property type="entry name" value="MATE_MurJ_like"/>
    <property type="match status" value="1"/>
</dbReference>
<dbReference type="HAMAP" id="MF_02078">
    <property type="entry name" value="MurJ_MviN"/>
    <property type="match status" value="1"/>
</dbReference>
<dbReference type="InterPro" id="IPR004268">
    <property type="entry name" value="MurJ"/>
</dbReference>
<dbReference type="NCBIfam" id="TIGR01695">
    <property type="entry name" value="murJ_mviN"/>
    <property type="match status" value="1"/>
</dbReference>
<dbReference type="PANTHER" id="PTHR43486">
    <property type="entry name" value="LIPID II FLIPPASE MURJ-RELATED"/>
    <property type="match status" value="1"/>
</dbReference>
<dbReference type="PANTHER" id="PTHR43486:SF1">
    <property type="entry name" value="LIPID II FLIPPASE MURJ-RELATED"/>
    <property type="match status" value="1"/>
</dbReference>
<dbReference type="Pfam" id="PF03023">
    <property type="entry name" value="MurJ"/>
    <property type="match status" value="1"/>
</dbReference>
<dbReference type="PRINTS" id="PR01806">
    <property type="entry name" value="VIRFACTRMVIN"/>
</dbReference>
<feature type="chain" id="PRO_0000182010" description="Probable lipid II flippase MurJ">
    <location>
        <begin position="1"/>
        <end position="460"/>
    </location>
</feature>
<feature type="transmembrane region" description="Helical" evidence="1">
    <location>
        <begin position="4"/>
        <end position="24"/>
    </location>
</feature>
<feature type="transmembrane region" description="Helical" evidence="1">
    <location>
        <begin position="50"/>
        <end position="70"/>
    </location>
</feature>
<feature type="transmembrane region" description="Helical" evidence="1">
    <location>
        <begin position="95"/>
        <end position="115"/>
    </location>
</feature>
<feature type="transmembrane region" description="Helical" evidence="1">
    <location>
        <begin position="122"/>
        <end position="142"/>
    </location>
</feature>
<feature type="transmembrane region" description="Helical" evidence="1">
    <location>
        <begin position="155"/>
        <end position="175"/>
    </location>
</feature>
<feature type="transmembrane region" description="Helical" evidence="1">
    <location>
        <begin position="228"/>
        <end position="248"/>
    </location>
</feature>
<feature type="transmembrane region" description="Helical" evidence="1">
    <location>
        <begin position="257"/>
        <end position="277"/>
    </location>
</feature>
<feature type="transmembrane region" description="Helical" evidence="1">
    <location>
        <begin position="292"/>
        <end position="312"/>
    </location>
</feature>
<feature type="transmembrane region" description="Helical" evidence="1">
    <location>
        <begin position="336"/>
        <end position="356"/>
    </location>
</feature>
<feature type="transmembrane region" description="Helical" evidence="1">
    <location>
        <begin position="366"/>
        <end position="386"/>
    </location>
</feature>
<feature type="transmembrane region" description="Helical" evidence="1">
    <location>
        <begin position="428"/>
        <end position="448"/>
    </location>
</feature>
<proteinExistence type="inferred from homology"/>
<evidence type="ECO:0000255" key="1">
    <source>
        <dbReference type="HAMAP-Rule" id="MF_02078"/>
    </source>
</evidence>
<accession>Q9ZKW7</accession>
<comment type="function">
    <text evidence="1">Involved in peptidoglycan biosynthesis. Transports lipid-linked peptidoglycan precursors from the inner to the outer leaflet of the cytoplasmic membrane.</text>
</comment>
<comment type="pathway">
    <text evidence="1">Cell wall biogenesis; peptidoglycan biosynthesis.</text>
</comment>
<comment type="subcellular location">
    <subcellularLocation>
        <location evidence="1">Cell inner membrane</location>
        <topology evidence="1">Multi-pass membrane protein</topology>
    </subcellularLocation>
</comment>
<comment type="similarity">
    <text evidence="1">Belongs to the MurJ/MviN family.</text>
</comment>
<protein>
    <recommendedName>
        <fullName evidence="1">Probable lipid II flippase MurJ</fullName>
    </recommendedName>
</protein>
<keyword id="KW-0997">Cell inner membrane</keyword>
<keyword id="KW-1003">Cell membrane</keyword>
<keyword id="KW-0133">Cell shape</keyword>
<keyword id="KW-0961">Cell wall biogenesis/degradation</keyword>
<keyword id="KW-0472">Membrane</keyword>
<keyword id="KW-0573">Peptidoglycan synthesis</keyword>
<keyword id="KW-0812">Transmembrane</keyword>
<keyword id="KW-1133">Transmembrane helix</keyword>
<keyword id="KW-0813">Transport</keyword>